<protein>
    <recommendedName>
        <fullName evidence="1">Putative N-acetylmannosamine-6-phosphate 2-epimerase</fullName>
        <ecNumber evidence="1">5.1.3.9</ecNumber>
    </recommendedName>
    <alternativeName>
        <fullName evidence="1">ManNAc-6-P epimerase</fullName>
    </alternativeName>
</protein>
<name>NANE_PASMU</name>
<dbReference type="EC" id="5.1.3.9" evidence="1"/>
<dbReference type="EMBL" id="AF237924">
    <property type="protein sequence ID" value="AAF68410.1"/>
    <property type="molecule type" value="Genomic_DNA"/>
</dbReference>
<dbReference type="EMBL" id="AE004439">
    <property type="protein sequence ID" value="AAK03795.1"/>
    <property type="molecule type" value="Genomic_DNA"/>
</dbReference>
<dbReference type="RefSeq" id="WP_005724602.1">
    <property type="nucleotide sequence ID" value="NC_002663.1"/>
</dbReference>
<dbReference type="SMR" id="Q9L6B4"/>
<dbReference type="STRING" id="272843.PM1711"/>
<dbReference type="EnsemblBacteria" id="AAK03795">
    <property type="protein sequence ID" value="AAK03795"/>
    <property type="gene ID" value="PM1711"/>
</dbReference>
<dbReference type="KEGG" id="pmu:PM1711"/>
<dbReference type="HOGENOM" id="CLU_086300_0_0_6"/>
<dbReference type="OrthoDB" id="9810372at2"/>
<dbReference type="UniPathway" id="UPA00629">
    <property type="reaction ID" value="UER00682"/>
</dbReference>
<dbReference type="Proteomes" id="UP000000809">
    <property type="component" value="Chromosome"/>
</dbReference>
<dbReference type="GO" id="GO:0005829">
    <property type="term" value="C:cytosol"/>
    <property type="evidence" value="ECO:0007669"/>
    <property type="project" value="TreeGrafter"/>
</dbReference>
<dbReference type="GO" id="GO:0047465">
    <property type="term" value="F:N-acylglucosamine-6-phosphate 2-epimerase activity"/>
    <property type="evidence" value="ECO:0007669"/>
    <property type="project" value="UniProtKB-EC"/>
</dbReference>
<dbReference type="GO" id="GO:0005975">
    <property type="term" value="P:carbohydrate metabolic process"/>
    <property type="evidence" value="ECO:0007669"/>
    <property type="project" value="UniProtKB-UniRule"/>
</dbReference>
<dbReference type="GO" id="GO:0006053">
    <property type="term" value="P:N-acetylmannosamine catabolic process"/>
    <property type="evidence" value="ECO:0007669"/>
    <property type="project" value="TreeGrafter"/>
</dbReference>
<dbReference type="GO" id="GO:0019262">
    <property type="term" value="P:N-acetylneuraminate catabolic process"/>
    <property type="evidence" value="ECO:0007669"/>
    <property type="project" value="UniProtKB-UniRule"/>
</dbReference>
<dbReference type="CDD" id="cd04729">
    <property type="entry name" value="NanE"/>
    <property type="match status" value="1"/>
</dbReference>
<dbReference type="FunFam" id="3.20.20.70:FF:000035">
    <property type="entry name" value="Putative N-acetylmannosamine-6-phosphate 2-epimerase"/>
    <property type="match status" value="1"/>
</dbReference>
<dbReference type="Gene3D" id="3.20.20.70">
    <property type="entry name" value="Aldolase class I"/>
    <property type="match status" value="1"/>
</dbReference>
<dbReference type="HAMAP" id="MF_01235">
    <property type="entry name" value="ManNAc6P_epimer"/>
    <property type="match status" value="1"/>
</dbReference>
<dbReference type="InterPro" id="IPR013785">
    <property type="entry name" value="Aldolase_TIM"/>
</dbReference>
<dbReference type="InterPro" id="IPR007260">
    <property type="entry name" value="NanE"/>
</dbReference>
<dbReference type="InterPro" id="IPR011060">
    <property type="entry name" value="RibuloseP-bd_barrel"/>
</dbReference>
<dbReference type="NCBIfam" id="NF002231">
    <property type="entry name" value="PRK01130.1"/>
    <property type="match status" value="1"/>
</dbReference>
<dbReference type="PANTHER" id="PTHR36204">
    <property type="entry name" value="N-ACETYLMANNOSAMINE-6-PHOSPHATE 2-EPIMERASE-RELATED"/>
    <property type="match status" value="1"/>
</dbReference>
<dbReference type="PANTHER" id="PTHR36204:SF1">
    <property type="entry name" value="N-ACETYLMANNOSAMINE-6-PHOSPHATE 2-EPIMERASE-RELATED"/>
    <property type="match status" value="1"/>
</dbReference>
<dbReference type="Pfam" id="PF04131">
    <property type="entry name" value="NanE"/>
    <property type="match status" value="1"/>
</dbReference>
<dbReference type="SUPFAM" id="SSF51366">
    <property type="entry name" value="Ribulose-phoshate binding barrel"/>
    <property type="match status" value="1"/>
</dbReference>
<evidence type="ECO:0000255" key="1">
    <source>
        <dbReference type="HAMAP-Rule" id="MF_01235"/>
    </source>
</evidence>
<keyword id="KW-0119">Carbohydrate metabolism</keyword>
<keyword id="KW-0413">Isomerase</keyword>
<keyword id="KW-1185">Reference proteome</keyword>
<organism>
    <name type="scientific">Pasteurella multocida (strain Pm70)</name>
    <dbReference type="NCBI Taxonomy" id="272843"/>
    <lineage>
        <taxon>Bacteria</taxon>
        <taxon>Pseudomonadati</taxon>
        <taxon>Pseudomonadota</taxon>
        <taxon>Gammaproteobacteria</taxon>
        <taxon>Pasteurellales</taxon>
        <taxon>Pasteurellaceae</taxon>
        <taxon>Pasteurella</taxon>
    </lineage>
</organism>
<reference key="1">
    <citation type="journal article" date="2000" name="Microb. Pathog.">
        <title>Identification of Pasteurella multocida virulence genes in a septicemic mouse model using signature-tagged mutagenesis.</title>
        <authorList>
            <person name="Fuller T.E."/>
            <person name="Kennedy M.J."/>
            <person name="Lowery D.E."/>
        </authorList>
    </citation>
    <scope>NUCLEOTIDE SEQUENCE [GENOMIC DNA]</scope>
</reference>
<reference key="2">
    <citation type="journal article" date="2001" name="Proc. Natl. Acad. Sci. U.S.A.">
        <title>Complete genomic sequence of Pasteurella multocida Pm70.</title>
        <authorList>
            <person name="May B.J."/>
            <person name="Zhang Q."/>
            <person name="Li L.L."/>
            <person name="Paustian M.L."/>
            <person name="Whittam T.S."/>
            <person name="Kapur V."/>
        </authorList>
    </citation>
    <scope>NUCLEOTIDE SEQUENCE [LARGE SCALE GENOMIC DNA]</scope>
    <source>
        <strain>Pm70</strain>
    </source>
</reference>
<accession>Q9L6B4</accession>
<feature type="chain" id="PRO_0000179788" description="Putative N-acetylmannosamine-6-phosphate 2-epimerase">
    <location>
        <begin position="1"/>
        <end position="228"/>
    </location>
</feature>
<gene>
    <name evidence="1" type="primary">nanE</name>
    <name type="ordered locus">PM1711</name>
</gene>
<comment type="function">
    <text evidence="1">Converts N-acetylmannosamine-6-phosphate (ManNAc-6-P) to N-acetylglucosamine-6-phosphate (GlcNAc-6-P).</text>
</comment>
<comment type="catalytic activity">
    <reaction evidence="1">
        <text>an N-acyl-D-glucosamine 6-phosphate = an N-acyl-D-mannosamine 6-phosphate</text>
        <dbReference type="Rhea" id="RHEA:23932"/>
        <dbReference type="ChEBI" id="CHEBI:57599"/>
        <dbReference type="ChEBI" id="CHEBI:57666"/>
        <dbReference type="EC" id="5.1.3.9"/>
    </reaction>
</comment>
<comment type="pathway">
    <text evidence="1">Amino-sugar metabolism; N-acetylneuraminate degradation; D-fructose 6-phosphate from N-acetylneuraminate: step 3/5.</text>
</comment>
<comment type="similarity">
    <text evidence="1">Belongs to the NanE family.</text>
</comment>
<sequence>MSKLSHPQVLEQIKYGLIASCQPVDNGPMDSPEIVAAMAQASVIGGAAGLRIEGIENLKATRNVVNVPIIGIVKRDLPDSPVRISPFLQDIEELAAAGADIIAFDGTDRVRPTTREAIIKRIKELGCLAMADCSNFEEGMYCHNLGVEIIGSTMSGYTGGEIPAEPDYQLVKDLNAAGCRVMAEGRYNTPELAKTAIEIGAYSVTVGSALTRLEHIVSWFADAVKSAK</sequence>
<proteinExistence type="inferred from homology"/>